<evidence type="ECO:0000255" key="1">
    <source>
        <dbReference type="HAMAP-Rule" id="MF_01216"/>
    </source>
</evidence>
<name>AZOR5_BURL3</name>
<organism>
    <name type="scientific">Burkholderia lata (strain ATCC 17760 / DSM 23089 / LMG 22485 / NCIMB 9086 / R18194 / 383)</name>
    <dbReference type="NCBI Taxonomy" id="482957"/>
    <lineage>
        <taxon>Bacteria</taxon>
        <taxon>Pseudomonadati</taxon>
        <taxon>Pseudomonadota</taxon>
        <taxon>Betaproteobacteria</taxon>
        <taxon>Burkholderiales</taxon>
        <taxon>Burkholderiaceae</taxon>
        <taxon>Burkholderia</taxon>
        <taxon>Burkholderia cepacia complex</taxon>
    </lineage>
</organism>
<sequence length="204" mass="21677">MNNLLFVDASPHGSRSLGARIAREAIAQWQAAHPHARVVSRSLGQPGLPSISADYAHALVARQPDSDPALACSEQLIAEVEHSDGVLISTPMHNFTVPAALKLWIDFVLRIGRTFAATPEGKVGLLADRPVLVLVRSGGICRGAAARQPDFLTPYLKQVLAVIGFSTVDFIYLEGVAPDDAAIDAVRGQLAQSALLARRATETA</sequence>
<feature type="chain" id="PRO_0000245905" description="FMN-dependent NADH:quinone oxidoreductase 5">
    <location>
        <begin position="1"/>
        <end position="204"/>
    </location>
</feature>
<feature type="binding site" evidence="1">
    <location>
        <position position="10"/>
    </location>
    <ligand>
        <name>FMN</name>
        <dbReference type="ChEBI" id="CHEBI:58210"/>
    </ligand>
</feature>
<keyword id="KW-0285">Flavoprotein</keyword>
<keyword id="KW-0288">FMN</keyword>
<keyword id="KW-0520">NAD</keyword>
<keyword id="KW-0560">Oxidoreductase</keyword>
<comment type="function">
    <text evidence="1">Quinone reductase that provides resistance to thiol-specific stress caused by electrophilic quinones.</text>
</comment>
<comment type="function">
    <text evidence="1">Also exhibits azoreductase activity. Catalyzes the reductive cleavage of the azo bond in aromatic azo compounds to the corresponding amines.</text>
</comment>
<comment type="catalytic activity">
    <reaction evidence="1">
        <text>2 a quinone + NADH + H(+) = 2 a 1,4-benzosemiquinone + NAD(+)</text>
        <dbReference type="Rhea" id="RHEA:65952"/>
        <dbReference type="ChEBI" id="CHEBI:15378"/>
        <dbReference type="ChEBI" id="CHEBI:57540"/>
        <dbReference type="ChEBI" id="CHEBI:57945"/>
        <dbReference type="ChEBI" id="CHEBI:132124"/>
        <dbReference type="ChEBI" id="CHEBI:134225"/>
    </reaction>
</comment>
<comment type="catalytic activity">
    <reaction evidence="1">
        <text>N,N-dimethyl-1,4-phenylenediamine + anthranilate + 2 NAD(+) = 2-(4-dimethylaminophenyl)diazenylbenzoate + 2 NADH + 2 H(+)</text>
        <dbReference type="Rhea" id="RHEA:55872"/>
        <dbReference type="ChEBI" id="CHEBI:15378"/>
        <dbReference type="ChEBI" id="CHEBI:15783"/>
        <dbReference type="ChEBI" id="CHEBI:16567"/>
        <dbReference type="ChEBI" id="CHEBI:57540"/>
        <dbReference type="ChEBI" id="CHEBI:57945"/>
        <dbReference type="ChEBI" id="CHEBI:71579"/>
        <dbReference type="EC" id="1.7.1.17"/>
    </reaction>
</comment>
<comment type="cofactor">
    <cofactor evidence="1">
        <name>FMN</name>
        <dbReference type="ChEBI" id="CHEBI:58210"/>
    </cofactor>
    <text evidence="1">Binds 1 FMN per subunit.</text>
</comment>
<comment type="subunit">
    <text evidence="1">Homodimer.</text>
</comment>
<comment type="similarity">
    <text evidence="1">Belongs to the azoreductase type 1 family.</text>
</comment>
<protein>
    <recommendedName>
        <fullName evidence="1">FMN-dependent NADH:quinone oxidoreductase 5</fullName>
        <ecNumber evidence="1">1.6.5.-</ecNumber>
    </recommendedName>
    <alternativeName>
        <fullName evidence="1">Azo-dye reductase 5</fullName>
    </alternativeName>
    <alternativeName>
        <fullName evidence="1">FMN-dependent NADH-azo compound oxidoreductase 5</fullName>
    </alternativeName>
    <alternativeName>
        <fullName evidence="1">FMN-dependent NADH-azoreductase 5</fullName>
        <ecNumber evidence="1">1.7.1.17</ecNumber>
    </alternativeName>
</protein>
<reference key="1">
    <citation type="submission" date="2005-10" db="EMBL/GenBank/DDBJ databases">
        <title>Complete sequence of chromosome 2 of Burkholderia sp. 383.</title>
        <authorList>
            <consortium name="US DOE Joint Genome Institute"/>
            <person name="Copeland A."/>
            <person name="Lucas S."/>
            <person name="Lapidus A."/>
            <person name="Barry K."/>
            <person name="Detter J.C."/>
            <person name="Glavina T."/>
            <person name="Hammon N."/>
            <person name="Israni S."/>
            <person name="Pitluck S."/>
            <person name="Chain P."/>
            <person name="Malfatti S."/>
            <person name="Shin M."/>
            <person name="Vergez L."/>
            <person name="Schmutz J."/>
            <person name="Larimer F."/>
            <person name="Land M."/>
            <person name="Kyrpides N."/>
            <person name="Lykidis A."/>
            <person name="Richardson P."/>
        </authorList>
    </citation>
    <scope>NUCLEOTIDE SEQUENCE [LARGE SCALE GENOMIC DNA]</scope>
    <source>
        <strain>ATCC 17760 / DSM 23089 / LMG 22485 / NCIMB 9086 / R18194 / 383</strain>
    </source>
</reference>
<proteinExistence type="inferred from homology"/>
<accession>Q390D0</accession>
<dbReference type="EC" id="1.6.5.-" evidence="1"/>
<dbReference type="EC" id="1.7.1.17" evidence="1"/>
<dbReference type="EMBL" id="CP000152">
    <property type="protein sequence ID" value="ABB13186.1"/>
    <property type="molecule type" value="Genomic_DNA"/>
</dbReference>
<dbReference type="RefSeq" id="WP_011356665.1">
    <property type="nucleotide sequence ID" value="NC_007511.1"/>
</dbReference>
<dbReference type="SMR" id="Q390D0"/>
<dbReference type="GeneID" id="45099378"/>
<dbReference type="KEGG" id="bur:Bcep18194_B3076"/>
<dbReference type="PATRIC" id="fig|482957.22.peg.6903"/>
<dbReference type="HOGENOM" id="CLU_088964_0_2_4"/>
<dbReference type="Proteomes" id="UP000002705">
    <property type="component" value="Chromosome 2"/>
</dbReference>
<dbReference type="GO" id="GO:0009055">
    <property type="term" value="F:electron transfer activity"/>
    <property type="evidence" value="ECO:0007669"/>
    <property type="project" value="UniProtKB-UniRule"/>
</dbReference>
<dbReference type="GO" id="GO:0010181">
    <property type="term" value="F:FMN binding"/>
    <property type="evidence" value="ECO:0007669"/>
    <property type="project" value="UniProtKB-UniRule"/>
</dbReference>
<dbReference type="GO" id="GO:0016652">
    <property type="term" value="F:oxidoreductase activity, acting on NAD(P)H as acceptor"/>
    <property type="evidence" value="ECO:0007669"/>
    <property type="project" value="UniProtKB-UniRule"/>
</dbReference>
<dbReference type="GO" id="GO:0016655">
    <property type="term" value="F:oxidoreductase activity, acting on NAD(P)H, quinone or similar compound as acceptor"/>
    <property type="evidence" value="ECO:0007669"/>
    <property type="project" value="InterPro"/>
</dbReference>
<dbReference type="Gene3D" id="3.40.50.360">
    <property type="match status" value="1"/>
</dbReference>
<dbReference type="HAMAP" id="MF_01216">
    <property type="entry name" value="Azoreductase_type1"/>
    <property type="match status" value="1"/>
</dbReference>
<dbReference type="InterPro" id="IPR003680">
    <property type="entry name" value="Flavodoxin_fold"/>
</dbReference>
<dbReference type="InterPro" id="IPR029039">
    <property type="entry name" value="Flavoprotein-like_sf"/>
</dbReference>
<dbReference type="InterPro" id="IPR050104">
    <property type="entry name" value="FMN-dep_NADH:Q_OxRdtase_AzoR1"/>
</dbReference>
<dbReference type="InterPro" id="IPR023048">
    <property type="entry name" value="NADH:quinone_OxRdtase_FMN_depd"/>
</dbReference>
<dbReference type="PANTHER" id="PTHR43741">
    <property type="entry name" value="FMN-DEPENDENT NADH-AZOREDUCTASE 1"/>
    <property type="match status" value="1"/>
</dbReference>
<dbReference type="PANTHER" id="PTHR43741:SF2">
    <property type="entry name" value="FMN-DEPENDENT NADH:QUINONE OXIDOREDUCTASE"/>
    <property type="match status" value="1"/>
</dbReference>
<dbReference type="Pfam" id="PF02525">
    <property type="entry name" value="Flavodoxin_2"/>
    <property type="match status" value="1"/>
</dbReference>
<dbReference type="SUPFAM" id="SSF52218">
    <property type="entry name" value="Flavoproteins"/>
    <property type="match status" value="1"/>
</dbReference>
<gene>
    <name evidence="1" type="primary">azoR5</name>
    <name type="ordered locus">Bcep18194_B3076</name>
</gene>